<evidence type="ECO:0000250" key="1">
    <source>
        <dbReference type="UniProtKB" id="Q9H237"/>
    </source>
</evidence>
<evidence type="ECO:0000250" key="2">
    <source>
        <dbReference type="UniProtKB" id="Q9JJJ7"/>
    </source>
</evidence>
<evidence type="ECO:0000250" key="3">
    <source>
        <dbReference type="UniProtKB" id="Q9VWV9"/>
    </source>
</evidence>
<evidence type="ECO:0000255" key="4"/>
<evidence type="ECO:0000305" key="5"/>
<evidence type="ECO:0000312" key="6">
    <source>
        <dbReference type="EMBL" id="EAA12856.1"/>
    </source>
</evidence>
<accession>Q7Q3N5</accession>
<gene>
    <name evidence="3" type="primary">por</name>
    <name type="ORF">AGAP007962</name>
</gene>
<sequence>MDYYYDDYYDEYYDHPDQAAARLFHRDLSIEETIKNCVHPSLRFATQYITNFIAINLLFSVLVLIVRKLFPTAQRSLHLLSCVCGAALVYRVIDHGFYHFLQLAVSLYAVQWTLHRWLTGTGRYIKTPFIVIAYGIGNLLVSELLEPSPETWNRIRGTQMILLMKALSLAFDTDDNHSLRSQLTVLSYSGYILCPANIVLGPWISFNDYLTIWKPPAGIEPKQCRSSSGRRMLIHVFRIVTSALMAVGFLLTSNCMIDYLLAPINSWKWVRAYGRALSFRTSHYFIGYLSQCSMMAAAADWHRAEDERSIMLPVSSLYRITSPMAVEFPRSLVQVVTAWNIPMHLWLKRYIFRTTKRPFGTGTAIALTYIISSLLHGLHYRLWITLLTIGSWTFVEHEVRKKLATIYSACVLVGKCPSSCTVHQHKSNSVFCTVINMLFFALNIFNLIYLGCIFESSEGPPDEVQQDKSMFGPWTELNYASHWLLVFAYLFYFVI</sequence>
<name>PORCN_ANOGA</name>
<feature type="chain" id="PRO_0000213139" description="Protein-serine O-palmitoleoyltransferase porcupine">
    <location>
        <begin position="1"/>
        <end position="495"/>
    </location>
</feature>
<feature type="transmembrane region" description="Helical" evidence="4">
    <location>
        <begin position="46"/>
        <end position="66"/>
    </location>
</feature>
<feature type="transmembrane region" description="Helical" evidence="4">
    <location>
        <begin position="92"/>
        <end position="112"/>
    </location>
</feature>
<feature type="transmembrane region" description="Helical" evidence="4">
    <location>
        <begin position="184"/>
        <end position="204"/>
    </location>
</feature>
<feature type="transmembrane region" description="Helical" evidence="4">
    <location>
        <begin position="232"/>
        <end position="252"/>
    </location>
</feature>
<feature type="transmembrane region" description="Helical" evidence="4">
    <location>
        <begin position="358"/>
        <end position="378"/>
    </location>
</feature>
<feature type="transmembrane region" description="Helical" evidence="4">
    <location>
        <begin position="403"/>
        <end position="422"/>
    </location>
</feature>
<feature type="transmembrane region" description="Helical" evidence="4">
    <location>
        <begin position="434"/>
        <end position="454"/>
    </location>
</feature>
<feature type="transmembrane region" description="Helical" evidence="4">
    <location>
        <begin position="475"/>
        <end position="495"/>
    </location>
</feature>
<feature type="active site" evidence="1">
    <location>
        <position position="376"/>
    </location>
</feature>
<organism>
    <name type="scientific">Anopheles gambiae</name>
    <name type="common">African malaria mosquito</name>
    <dbReference type="NCBI Taxonomy" id="7165"/>
    <lineage>
        <taxon>Eukaryota</taxon>
        <taxon>Metazoa</taxon>
        <taxon>Ecdysozoa</taxon>
        <taxon>Arthropoda</taxon>
        <taxon>Hexapoda</taxon>
        <taxon>Insecta</taxon>
        <taxon>Pterygota</taxon>
        <taxon>Neoptera</taxon>
        <taxon>Endopterygota</taxon>
        <taxon>Diptera</taxon>
        <taxon>Nematocera</taxon>
        <taxon>Culicoidea</taxon>
        <taxon>Culicidae</taxon>
        <taxon>Anophelinae</taxon>
        <taxon>Anopheles</taxon>
    </lineage>
</organism>
<reference evidence="5 6" key="1">
    <citation type="journal article" date="2002" name="Science">
        <title>The genome sequence of the malaria mosquito Anopheles gambiae.</title>
        <authorList>
            <person name="Holt R.A."/>
            <person name="Subramanian G.M."/>
            <person name="Halpern A."/>
            <person name="Sutton G.G."/>
            <person name="Charlab R."/>
            <person name="Nusskern D.R."/>
            <person name="Wincker P."/>
            <person name="Clark A.G."/>
            <person name="Ribeiro J.M.C."/>
            <person name="Wides R."/>
            <person name="Salzberg S.L."/>
            <person name="Loftus B.J."/>
            <person name="Yandell M.D."/>
            <person name="Majoros W.H."/>
            <person name="Rusch D.B."/>
            <person name="Lai Z."/>
            <person name="Kraft C.L."/>
            <person name="Abril J.F."/>
            <person name="Anthouard V."/>
            <person name="Arensburger P."/>
            <person name="Atkinson P.W."/>
            <person name="Baden H."/>
            <person name="de Berardinis V."/>
            <person name="Baldwin D."/>
            <person name="Benes V."/>
            <person name="Biedler J."/>
            <person name="Blass C."/>
            <person name="Bolanos R."/>
            <person name="Boscus D."/>
            <person name="Barnstead M."/>
            <person name="Cai S."/>
            <person name="Center A."/>
            <person name="Chaturverdi K."/>
            <person name="Christophides G.K."/>
            <person name="Chrystal M.A.M."/>
            <person name="Clamp M."/>
            <person name="Cravchik A."/>
            <person name="Curwen V."/>
            <person name="Dana A."/>
            <person name="Delcher A."/>
            <person name="Dew I."/>
            <person name="Evans C.A."/>
            <person name="Flanigan M."/>
            <person name="Grundschober-Freimoser A."/>
            <person name="Friedli L."/>
            <person name="Gu Z."/>
            <person name="Guan P."/>
            <person name="Guigo R."/>
            <person name="Hillenmeyer M.E."/>
            <person name="Hladun S.L."/>
            <person name="Hogan J.R."/>
            <person name="Hong Y.S."/>
            <person name="Hoover J."/>
            <person name="Jaillon O."/>
            <person name="Ke Z."/>
            <person name="Kodira C.D."/>
            <person name="Kokoza E."/>
            <person name="Koutsos A."/>
            <person name="Letunic I."/>
            <person name="Levitsky A.A."/>
            <person name="Liang Y."/>
            <person name="Lin J.-J."/>
            <person name="Lobo N.F."/>
            <person name="Lopez J.R."/>
            <person name="Malek J.A."/>
            <person name="McIntosh T.C."/>
            <person name="Meister S."/>
            <person name="Miller J.R."/>
            <person name="Mobarry C."/>
            <person name="Mongin E."/>
            <person name="Murphy S.D."/>
            <person name="O'Brochta D.A."/>
            <person name="Pfannkoch C."/>
            <person name="Qi R."/>
            <person name="Regier M.A."/>
            <person name="Remington K."/>
            <person name="Shao H."/>
            <person name="Sharakhova M.V."/>
            <person name="Sitter C.D."/>
            <person name="Shetty J."/>
            <person name="Smith T.J."/>
            <person name="Strong R."/>
            <person name="Sun J."/>
            <person name="Thomasova D."/>
            <person name="Ton L.Q."/>
            <person name="Topalis P."/>
            <person name="Tu Z.J."/>
            <person name="Unger M.F."/>
            <person name="Walenz B."/>
            <person name="Wang A.H."/>
            <person name="Wang J."/>
            <person name="Wang M."/>
            <person name="Wang X."/>
            <person name="Woodford K.J."/>
            <person name="Wortman J.R."/>
            <person name="Wu M."/>
            <person name="Yao A."/>
            <person name="Zdobnov E.M."/>
            <person name="Zhang H."/>
            <person name="Zhao Q."/>
            <person name="Zhao S."/>
            <person name="Zhu S.C."/>
            <person name="Zhimulev I."/>
            <person name="Coluzzi M."/>
            <person name="della Torre A."/>
            <person name="Roth C.W."/>
            <person name="Louis C."/>
            <person name="Kalush F."/>
            <person name="Mural R.J."/>
            <person name="Myers E.W."/>
            <person name="Adams M.D."/>
            <person name="Smith H.O."/>
            <person name="Broder S."/>
            <person name="Gardner M.J."/>
            <person name="Fraser C.M."/>
            <person name="Birney E."/>
            <person name="Bork P."/>
            <person name="Brey P.T."/>
            <person name="Venter J.C."/>
            <person name="Weissenbach J."/>
            <person name="Kafatos F.C."/>
            <person name="Collins F.H."/>
            <person name="Hoffman S.L."/>
        </authorList>
    </citation>
    <scope>NUCLEOTIDE SEQUENCE [LARGE SCALE GENOMIC DNA]</scope>
    <source>
        <strain evidence="6">PEST</strain>
    </source>
</reference>
<protein>
    <recommendedName>
        <fullName evidence="2">Protein-serine O-palmitoleoyltransferase porcupine</fullName>
        <ecNumber evidence="2">2.3.1.250</ecNumber>
    </recommendedName>
</protein>
<proteinExistence type="inferred from homology"/>
<keyword id="KW-0012">Acyltransferase</keyword>
<keyword id="KW-0256">Endoplasmic reticulum</keyword>
<keyword id="KW-0472">Membrane</keyword>
<keyword id="KW-1185">Reference proteome</keyword>
<keyword id="KW-0808">Transferase</keyword>
<keyword id="KW-0812">Transmembrane</keyword>
<keyword id="KW-1133">Transmembrane helix</keyword>
<keyword id="KW-0879">Wnt signaling pathway</keyword>
<comment type="function">
    <text evidence="2">Protein-serine O-palmitoleoyltransferase that acts as a key regulator of the Wnt signaling pathway by mediating the attachment of palmitoleate, a 16-carbon monounsaturated fatty acid (C16:1(9Z)), to Wnt proteins. Serine palmitoleoylation of WNT proteins is required for efficient binding to frizzled receptors.</text>
</comment>
<comment type="catalytic activity">
    <reaction evidence="2">
        <text>[Wnt protein]-L-serine + (9Z)-hexadecenoyl-CoA = [Wnt protein]-O-(9Z)-hexadecenoyl-L-serine + CoA</text>
        <dbReference type="Rhea" id="RHEA:45336"/>
        <dbReference type="Rhea" id="RHEA-COMP:11170"/>
        <dbReference type="Rhea" id="RHEA-COMP:11171"/>
        <dbReference type="ChEBI" id="CHEBI:29999"/>
        <dbReference type="ChEBI" id="CHEBI:57287"/>
        <dbReference type="ChEBI" id="CHEBI:61540"/>
        <dbReference type="ChEBI" id="CHEBI:85189"/>
        <dbReference type="EC" id="2.3.1.250"/>
    </reaction>
</comment>
<comment type="subcellular location">
    <subcellularLocation>
        <location evidence="3">Endoplasmic reticulum membrane</location>
        <topology evidence="3">Multi-pass membrane protein</topology>
    </subcellularLocation>
</comment>
<comment type="similarity">
    <text evidence="5">Belongs to the membrane-bound acyltransferase family. Porcupine subfamily.</text>
</comment>
<dbReference type="EC" id="2.3.1.250" evidence="2"/>
<dbReference type="EMBL" id="AAAB01008964">
    <property type="protein sequence ID" value="EAA12856.1"/>
    <property type="molecule type" value="Genomic_DNA"/>
</dbReference>
<dbReference type="RefSeq" id="XP_317509.1">
    <property type="nucleotide sequence ID" value="XM_317509.1"/>
</dbReference>
<dbReference type="SMR" id="Q7Q3N5"/>
<dbReference type="FunCoup" id="Q7Q3N5">
    <property type="interactions" value="479"/>
</dbReference>
<dbReference type="STRING" id="7165.Q7Q3N5"/>
<dbReference type="PaxDb" id="7165-AGAP007962-PA"/>
<dbReference type="EnsemblMetazoa" id="AGAP007962-RA">
    <property type="protein sequence ID" value="AGAP007962-PA"/>
    <property type="gene ID" value="AGAP007962"/>
</dbReference>
<dbReference type="GeneID" id="1277989"/>
<dbReference type="KEGG" id="aga:1277989"/>
<dbReference type="CTD" id="5447"/>
<dbReference type="VEuPathDB" id="VectorBase:AGAMI1_007354"/>
<dbReference type="VEuPathDB" id="VectorBase:AGAP007962"/>
<dbReference type="eggNOG" id="KOG4312">
    <property type="taxonomic scope" value="Eukaryota"/>
</dbReference>
<dbReference type="HOGENOM" id="CLU_048745_0_0_1"/>
<dbReference type="InParanoid" id="Q7Q3N5"/>
<dbReference type="OMA" id="WRQRSDW"/>
<dbReference type="PhylomeDB" id="Q7Q3N5"/>
<dbReference type="Proteomes" id="UP000007062">
    <property type="component" value="Chromosome 3R"/>
</dbReference>
<dbReference type="GO" id="GO:0005783">
    <property type="term" value="C:endoplasmic reticulum"/>
    <property type="evidence" value="ECO:0000250"/>
    <property type="project" value="UniProtKB"/>
</dbReference>
<dbReference type="GO" id="GO:0005789">
    <property type="term" value="C:endoplasmic reticulum membrane"/>
    <property type="evidence" value="ECO:0007669"/>
    <property type="project" value="UniProtKB-SubCell"/>
</dbReference>
<dbReference type="GO" id="GO:0016020">
    <property type="term" value="C:membrane"/>
    <property type="evidence" value="ECO:0000318"/>
    <property type="project" value="GO_Central"/>
</dbReference>
<dbReference type="GO" id="GO:1990698">
    <property type="term" value="F:palmitoleoyltransferase activity"/>
    <property type="evidence" value="ECO:0000250"/>
    <property type="project" value="UniProtKB"/>
</dbReference>
<dbReference type="GO" id="GO:0017147">
    <property type="term" value="F:Wnt-protein binding"/>
    <property type="evidence" value="ECO:0000318"/>
    <property type="project" value="GO_Central"/>
</dbReference>
<dbReference type="GO" id="GO:0030258">
    <property type="term" value="P:lipid modification"/>
    <property type="evidence" value="ECO:0000318"/>
    <property type="project" value="GO_Central"/>
</dbReference>
<dbReference type="GO" id="GO:0006497">
    <property type="term" value="P:protein lipidation"/>
    <property type="evidence" value="ECO:0000250"/>
    <property type="project" value="UniProtKB"/>
</dbReference>
<dbReference type="GO" id="GO:0045234">
    <property type="term" value="P:protein palmitoleylation"/>
    <property type="evidence" value="ECO:0000250"/>
    <property type="project" value="UniProtKB"/>
</dbReference>
<dbReference type="GO" id="GO:0061355">
    <property type="term" value="P:Wnt protein secretion"/>
    <property type="evidence" value="ECO:0000318"/>
    <property type="project" value="GO_Central"/>
</dbReference>
<dbReference type="GO" id="GO:0016055">
    <property type="term" value="P:Wnt signaling pathway"/>
    <property type="evidence" value="ECO:0000250"/>
    <property type="project" value="UniProtKB"/>
</dbReference>
<dbReference type="InterPro" id="IPR049941">
    <property type="entry name" value="LPLAT_7/PORCN-like"/>
</dbReference>
<dbReference type="InterPro" id="IPR004299">
    <property type="entry name" value="MBOAT_fam"/>
</dbReference>
<dbReference type="PANTHER" id="PTHR13906">
    <property type="entry name" value="PORCUPINE"/>
    <property type="match status" value="1"/>
</dbReference>
<dbReference type="PANTHER" id="PTHR13906:SF12">
    <property type="entry name" value="PROTEIN-SERINE O-PALMITOLEOYLTRANSFERASE PORCUPINE"/>
    <property type="match status" value="1"/>
</dbReference>
<dbReference type="Pfam" id="PF03062">
    <property type="entry name" value="MBOAT"/>
    <property type="match status" value="1"/>
</dbReference>